<reference key="1">
    <citation type="submission" date="2003-03" db="EMBL/GenBank/DDBJ databases">
        <title>African swine fever virus genomes.</title>
        <authorList>
            <person name="Kutish G.F."/>
            <person name="Rock D.L."/>
        </authorList>
    </citation>
    <scope>NUCLEOTIDE SEQUENCE [LARGE SCALE GENOMIC DNA]</scope>
</reference>
<organism>
    <name type="scientific">African swine fever virus (isolate Warthog/Namibia/Wart80/1980)</name>
    <name type="common">ASFV</name>
    <dbReference type="NCBI Taxonomy" id="561444"/>
    <lineage>
        <taxon>Viruses</taxon>
        <taxon>Varidnaviria</taxon>
        <taxon>Bamfordvirae</taxon>
        <taxon>Nucleocytoviricota</taxon>
        <taxon>Pokkesviricetes</taxon>
        <taxon>Asfuvirales</taxon>
        <taxon>Asfarviridae</taxon>
        <taxon>Asfivirus</taxon>
        <taxon>African swine fever virus</taxon>
    </lineage>
</organism>
<organismHost>
    <name type="scientific">Ornithodoros</name>
    <name type="common">relapsing fever ticks</name>
    <dbReference type="NCBI Taxonomy" id="6937"/>
</organismHost>
<organismHost>
    <name type="scientific">Phacochoerus aethiopicus</name>
    <name type="common">Warthog</name>
    <dbReference type="NCBI Taxonomy" id="85517"/>
</organismHost>
<organismHost>
    <name type="scientific">Phacochoerus africanus</name>
    <name type="common">Warthog</name>
    <dbReference type="NCBI Taxonomy" id="41426"/>
</organismHost>
<organismHost>
    <name type="scientific">Potamochoerus larvatus</name>
    <name type="common">Bushpig</name>
    <dbReference type="NCBI Taxonomy" id="273792"/>
</organismHost>
<organismHost>
    <name type="scientific">Sus scrofa</name>
    <name type="common">Pig</name>
    <dbReference type="NCBI Taxonomy" id="9823"/>
</organismHost>
<sequence length="95" mass="10691">MSTHNNSPKEKPVDMNNISEKLDVVNNAPEKPAGANHIPEKSAEMTSSEWIAEYWKGINRGNDVPCCCPRKMTSVDKKFSVFGKGYLMRSMQKDD</sequence>
<feature type="chain" id="PRO_0000379091" description="Uncharacterized protein DP96R">
    <location>
        <begin position="1"/>
        <end position="95"/>
    </location>
</feature>
<proteinExistence type="inferred from homology"/>
<gene>
    <name type="ordered locus">War-171</name>
</gene>
<protein>
    <recommendedName>
        <fullName>Uncharacterized protein DP96R</fullName>
    </recommendedName>
</protein>
<accession>P0C757</accession>
<comment type="similarity">
    <text evidence="1">Belongs to the asfivirus DP96R family.</text>
</comment>
<evidence type="ECO:0000305" key="1"/>
<dbReference type="EMBL" id="AY261366">
    <property type="status" value="NOT_ANNOTATED_CDS"/>
    <property type="molecule type" value="Genomic_DNA"/>
</dbReference>
<dbReference type="Proteomes" id="UP000000858">
    <property type="component" value="Segment"/>
</dbReference>
<dbReference type="InterPro" id="IPR003670">
    <property type="entry name" value="ASFV_DP96R"/>
</dbReference>
<dbReference type="Pfam" id="PF02512">
    <property type="entry name" value="UK"/>
    <property type="match status" value="1"/>
</dbReference>
<name>VF96_ASFWA</name>